<dbReference type="GO" id="GO:0005576">
    <property type="term" value="C:extracellular region"/>
    <property type="evidence" value="ECO:0007669"/>
    <property type="project" value="UniProtKB-SubCell"/>
</dbReference>
<dbReference type="InterPro" id="IPR049518">
    <property type="entry name" value="Pilosulin"/>
</dbReference>
<dbReference type="Pfam" id="PF17499">
    <property type="entry name" value="Pilosulin"/>
    <property type="match status" value="1"/>
</dbReference>
<organism>
    <name type="scientific">Myrmecia gulosa</name>
    <name type="common">Red bulldog ant</name>
    <dbReference type="NCBI Taxonomy" id="36170"/>
    <lineage>
        <taxon>Eukaryota</taxon>
        <taxon>Metazoa</taxon>
        <taxon>Ecdysozoa</taxon>
        <taxon>Arthropoda</taxon>
        <taxon>Hexapoda</taxon>
        <taxon>Insecta</taxon>
        <taxon>Pterygota</taxon>
        <taxon>Neoptera</taxon>
        <taxon>Endopterygota</taxon>
        <taxon>Hymenoptera</taxon>
        <taxon>Apocrita</taxon>
        <taxon>Aculeata</taxon>
        <taxon>Formicoidea</taxon>
        <taxon>Formicidae</taxon>
        <taxon>Myrmeciinae</taxon>
        <taxon>Myrmeciini</taxon>
        <taxon>Myrmecia</taxon>
    </lineage>
</organism>
<proteinExistence type="inferred from homology"/>
<sequence>MKLSYLSLALAIILVLAIVYSPHMEVKALADAEPDAIGFADAFGEADAEPKRRRRLRKIIRKVIKGTGKVAGEAAASAVAGAAVSAAIDAAVGTTEEPEQ</sequence>
<protein>
    <recommendedName>
        <fullName evidence="6">U-myrmeciitoxin(01)-Mg7c</fullName>
        <shortName evidence="5">MIITX(01)-Mg7c</shortName>
        <shortName evidence="6">U-MIITX(01)-Mg7c</shortName>
    </recommendedName>
</protein>
<evidence type="ECO:0000250" key="1">
    <source>
        <dbReference type="UniProtKB" id="P0DPX0"/>
    </source>
</evidence>
<evidence type="ECO:0000250" key="2">
    <source>
        <dbReference type="UniProtKB" id="P0DSK3"/>
    </source>
</evidence>
<evidence type="ECO:0000255" key="3"/>
<evidence type="ECO:0000269" key="4">
    <source>
    </source>
</evidence>
<evidence type="ECO:0000303" key="5">
    <source>
    </source>
</evidence>
<evidence type="ECO:0000305" key="6"/>
<evidence type="ECO:0000305" key="7">
    <source>
    </source>
</evidence>
<name>TX17C_MYRGU</name>
<accession>P0DSK4</accession>
<keyword id="KW-0325">Glycoprotein</keyword>
<keyword id="KW-0472">Membrane</keyword>
<keyword id="KW-0528">Neurotoxin</keyword>
<keyword id="KW-0964">Secreted</keyword>
<keyword id="KW-0732">Signal</keyword>
<keyword id="KW-1052">Target cell membrane</keyword>
<keyword id="KW-1053">Target membrane</keyword>
<keyword id="KW-0800">Toxin</keyword>
<comment type="function">
    <text evidence="2">Neurotoxin that triggers pain behavior and inflammation in mammals, and is paralytic and lethal to insects. Causes a time-dependent increase in cell leak current. May act by targeting membranes.</text>
</comment>
<comment type="subcellular location">
    <subcellularLocation>
        <location evidence="7">Secreted</location>
    </subcellularLocation>
    <subcellularLocation>
        <location evidence="2">Target cell membrane</location>
    </subcellularLocation>
    <text evidence="2">Adopts helical secondary structure in membrane-mimicking environment.</text>
</comment>
<comment type="tissue specificity">
    <text evidence="7">Expressed by the venom gland.</text>
</comment>
<comment type="PTM">
    <text evidence="2">Glycosylation is critical to maintaining the aqueous solubility of this protein, but does not directly contribute to its activity.</text>
</comment>
<comment type="miscellaneous">
    <text evidence="7">Not detected in the venom.</text>
</comment>
<comment type="miscellaneous">
    <text evidence="4">Very highly expressed in the venom apparatus (3%).</text>
</comment>
<comment type="similarity">
    <text evidence="6">Belongs to the formicidae venom precursor-01 superfamily.</text>
</comment>
<comment type="online information" name="National Center for Biotechnology Information (NCBI)">
    <link uri="https://www.ncbi.nlm.nih.gov/nuccore/GGFG01000011"/>
</comment>
<reference key="1">
    <citation type="journal article" date="2018" name="Sci. Adv.">
        <title>A comprehensive portrait of the venom of the giant red bull ant, Myrmecia gulosa, reveals a hyperdiverse hymenopteran toxin gene family.</title>
        <authorList>
            <person name="Robinson S.D."/>
            <person name="Mueller A."/>
            <person name="Clayton D."/>
            <person name="Starobova H."/>
            <person name="Hamilton B.R."/>
            <person name="Payne R.J."/>
            <person name="Vetter I."/>
            <person name="King G.F."/>
            <person name="Undheim E.A.B."/>
        </authorList>
    </citation>
    <scope>NUCLEOTIDE SEQUENCE [MRNA]</scope>
    <source>
        <tissue>Venom gland</tissue>
    </source>
</reference>
<reference key="2">
    <citation type="journal article" date="2021" name="IScience">
        <title>A pain-causing and paralytic ant venom glycopeptide.</title>
        <authorList>
            <person name="Robinson S.D."/>
            <person name="Kambanis L."/>
            <person name="Clayton D."/>
            <person name="Hinneburg H."/>
            <person name="Corcilius L."/>
            <person name="Mueller A."/>
            <person name="Walker A.A."/>
            <person name="Keramidas A."/>
            <person name="Kulkarni S.S."/>
            <person name="Jones A."/>
            <person name="Vetter I."/>
            <person name="Thaysen-Andersen M."/>
            <person name="Payne R.J."/>
            <person name="King G.F."/>
            <person name="Undheim E.A.B."/>
        </authorList>
    </citation>
    <scope>TRANSCRIPTS ABUNDANCE</scope>
</reference>
<feature type="signal peptide" evidence="3">
    <location>
        <begin position="1"/>
        <end position="17"/>
    </location>
</feature>
<feature type="propeptide" id="PRO_0000447094" evidence="7">
    <location>
        <begin position="18"/>
        <end position="50"/>
    </location>
</feature>
<feature type="chain" id="PRO_0000447095" description="U-myrmeciitoxin(01)-Mg7c" evidence="1">
    <location>
        <begin position="51"/>
        <end position="100"/>
    </location>
</feature>
<feature type="glycosylation site" description="O-linked (GalNAc...) serine" evidence="2">
    <location>
        <position position="85"/>
    </location>
</feature>
<feature type="glycosylation site" description="O-linked (GalNAc...) threonine" evidence="2">
    <location>
        <position position="94"/>
    </location>
</feature>
<feature type="glycosylation site" description="O-linked (GalNAc...) threonine" evidence="2">
    <location>
        <position position="95"/>
    </location>
</feature>